<gene>
    <name type="primary">rpoB</name>
</gene>
<proteinExistence type="inferred from homology"/>
<geneLocation type="apicoplast"/>
<sequence length="1051" mass="124290">MNFKIKTFFSIKSNKIFYTDFYFFLKKKLIILIKNIFPEYFNFNNKYKNWNLICLYDLLYFKVNNINFLDNVQYINSLIKIFLPLKFQNLKTNKVFFKNLLIFELPKYNSYNYCYLNGLKKIFISKYFTSNGIFFNKYLKRKYNIYYAKLLLTNSNFFNIILDLKLKQIYLSIKNLKFNFILFLYYLGIKNTDILKYSRYKNSKILKLLIFSALQTDLVNNKKIILKNLNYLKSIFKLTILNKNYKNFIISKDKLNYNYGDFSKNNLLIIDFIFILDLLLDLQSKKLCFKTIDHLDNKHINTIGNYFQHNFKFYLKKFISIIPNLIKLQKFSLLKVYNFKELLILNPLIQYLEQINSFSELMHKYKLNNYNSFSKGILNLREICLNQLGKLCLIDTTEGINCGLVVSFAKHIRIYKKGIIQVYFSSIFKNKTKEFLNFKTSLDQELYLIQFNNINLRKIKYLMNVRLVYNKNNFRIKFFSNKKSILLEFTDLFSFTENLIPFIKYNDPARCLMGAKMQSQSVPLLNKKKSFVITGYEKEIITKSDTTIKALQEGIVLNASSLKIHIKDLFNREIVYYLSKYKKSNQNTIIHQKPLVWNGERVFTNQLLTQHQDIIDSEFAIGNNLLFYYGNFCGYDFEDAVIVSKRVLYQQLFSSLHMDIYEFNFCYNNENDIEFSTLEIPKQSYYIKKNLDSLGIIKEGEKILTGSILLTKIKVAKPTYTYKSIFKLIYSIFGKTIRNIKDNSLYIQTGKSGRVSKIELFLVNISSRHKYKTYNNSYLKCRIFICKQRFLTVGDKLCGRYGNKGILSYIAENADLPFLQNSFYPDIIVGALGIPSRMNLGQLFEALVGKISFSYNIRILPSFTTSSNLYFNYLKILIYNFLMFNNFKKGFNWLYNFNLPGKFIIRDGRTGVKLKSSVLCGVSRYSKLIHLIKDKLHFRTTGPYTEILQQPLKGKKNLGGQRFGEMEIWALEAFGASYNLKEILNYKSDDCFARNNLKEYLLFRNTELQNSTITESFRVILKEFNGLILNLELFLITDDLEENYLNLTINY</sequence>
<accession>Q9MTD3</accession>
<accession>O97123</accession>
<organism>
    <name type="scientific">Toxoplasma gondii</name>
    <dbReference type="NCBI Taxonomy" id="5811"/>
    <lineage>
        <taxon>Eukaryota</taxon>
        <taxon>Sar</taxon>
        <taxon>Alveolata</taxon>
        <taxon>Apicomplexa</taxon>
        <taxon>Conoidasida</taxon>
        <taxon>Coccidia</taxon>
        <taxon>Eucoccidiorida</taxon>
        <taxon>Eimeriorina</taxon>
        <taxon>Sarcocystidae</taxon>
        <taxon>Toxoplasma</taxon>
    </lineage>
</organism>
<evidence type="ECO:0000250" key="1"/>
<evidence type="ECO:0000305" key="2"/>
<keyword id="KW-0933">Apicoplast</keyword>
<keyword id="KW-0240">DNA-directed RNA polymerase</keyword>
<keyword id="KW-0548">Nucleotidyltransferase</keyword>
<keyword id="KW-0934">Plastid</keyword>
<keyword id="KW-0804">Transcription</keyword>
<keyword id="KW-0808">Transferase</keyword>
<comment type="function">
    <text evidence="1">DNA-dependent RNA polymerase catalyzes the transcription of DNA into RNA using the four ribonucleoside triphosphates as substrates.</text>
</comment>
<comment type="catalytic activity">
    <reaction>
        <text>RNA(n) + a ribonucleoside 5'-triphosphate = RNA(n+1) + diphosphate</text>
        <dbReference type="Rhea" id="RHEA:21248"/>
        <dbReference type="Rhea" id="RHEA-COMP:14527"/>
        <dbReference type="Rhea" id="RHEA-COMP:17342"/>
        <dbReference type="ChEBI" id="CHEBI:33019"/>
        <dbReference type="ChEBI" id="CHEBI:61557"/>
        <dbReference type="ChEBI" id="CHEBI:140395"/>
        <dbReference type="EC" id="2.7.7.6"/>
    </reaction>
</comment>
<comment type="subunit">
    <text evidence="2">In plastids the minimal PEP RNA polymerase catalytic core is composed of four subunits: alpha, beta, beta', and beta''. When a (nuclear-encoded) sigma factor is associated with the core the holoenzyme is formed, which can initiate transcription (Potential).</text>
</comment>
<comment type="subcellular location">
    <subcellularLocation>
        <location>Plastid</location>
        <location>Apicoplast</location>
    </subcellularLocation>
</comment>
<comment type="similarity">
    <text evidence="2">Belongs to the RNA polymerase beta chain family.</text>
</comment>
<dbReference type="EC" id="2.7.7.6"/>
<dbReference type="EMBL" id="AF095904">
    <property type="protein sequence ID" value="AAD17842.1"/>
    <property type="molecule type" value="Genomic_DNA"/>
</dbReference>
<dbReference type="EMBL" id="U87145">
    <property type="protein sequence ID" value="AAD41152.1"/>
    <property type="molecule type" value="Genomic_DNA"/>
</dbReference>
<dbReference type="RefSeq" id="NP_044569.1">
    <property type="nucleotide sequence ID" value="NC_001799.1"/>
</dbReference>
<dbReference type="SMR" id="Q9MTD3"/>
<dbReference type="VEuPathDB" id="ToxoDB:TGARI_300660"/>
<dbReference type="VEuPathDB" id="ToxoDB:TGCAST_258210"/>
<dbReference type="VEuPathDB" id="ToxoDB:TGCAST_272740"/>
<dbReference type="VEuPathDB" id="ToxoDB:TGCOUG_258210"/>
<dbReference type="VEuPathDB" id="ToxoDB:TGCOUG_397150"/>
<dbReference type="VEuPathDB" id="ToxoDB:TGDOM2_272740"/>
<dbReference type="VEuPathDB" id="ToxoDB:TGDOM2_402140"/>
<dbReference type="VEuPathDB" id="ToxoDB:TGDOM2_402230"/>
<dbReference type="VEuPathDB" id="ToxoDB:TGDOM2_402260"/>
<dbReference type="VEuPathDB" id="ToxoDB:TGFOU_300660"/>
<dbReference type="VEuPathDB" id="ToxoDB:TGGT1_258210"/>
<dbReference type="VEuPathDB" id="ToxoDB:TGGT1_272740"/>
<dbReference type="VEuPathDB" id="ToxoDB:TGMAS_300660"/>
<dbReference type="VEuPathDB" id="ToxoDB:TGME49_300660"/>
<dbReference type="VEuPathDB" id="ToxoDB:TGP89_300660"/>
<dbReference type="VEuPathDB" id="ToxoDB:TGPRC2_300660"/>
<dbReference type="VEuPathDB" id="ToxoDB:TGRH88_086510"/>
<dbReference type="VEuPathDB" id="ToxoDB:TGRUB_300660"/>
<dbReference type="VEuPathDB" id="ToxoDB:TGVAND_258210"/>
<dbReference type="VEuPathDB" id="ToxoDB:TGVEG_258210"/>
<dbReference type="VEuPathDB" id="ToxoDB:TGVEG_272740"/>
<dbReference type="GO" id="GO:0020011">
    <property type="term" value="C:apicoplast"/>
    <property type="evidence" value="ECO:0007669"/>
    <property type="project" value="UniProtKB-SubCell"/>
</dbReference>
<dbReference type="GO" id="GO:0000428">
    <property type="term" value="C:DNA-directed RNA polymerase complex"/>
    <property type="evidence" value="ECO:0007669"/>
    <property type="project" value="UniProtKB-KW"/>
</dbReference>
<dbReference type="GO" id="GO:0005739">
    <property type="term" value="C:mitochondrion"/>
    <property type="evidence" value="ECO:0007669"/>
    <property type="project" value="GOC"/>
</dbReference>
<dbReference type="GO" id="GO:0003677">
    <property type="term" value="F:DNA binding"/>
    <property type="evidence" value="ECO:0007669"/>
    <property type="project" value="InterPro"/>
</dbReference>
<dbReference type="GO" id="GO:0003899">
    <property type="term" value="F:DNA-directed RNA polymerase activity"/>
    <property type="evidence" value="ECO:0007669"/>
    <property type="project" value="UniProtKB-EC"/>
</dbReference>
<dbReference type="GO" id="GO:0032549">
    <property type="term" value="F:ribonucleoside binding"/>
    <property type="evidence" value="ECO:0007669"/>
    <property type="project" value="InterPro"/>
</dbReference>
<dbReference type="GO" id="GO:0006351">
    <property type="term" value="P:DNA-templated transcription"/>
    <property type="evidence" value="ECO:0007669"/>
    <property type="project" value="InterPro"/>
</dbReference>
<dbReference type="CDD" id="cd00653">
    <property type="entry name" value="RNA_pol_B_RPB2"/>
    <property type="match status" value="1"/>
</dbReference>
<dbReference type="Gene3D" id="2.40.50.100">
    <property type="match status" value="1"/>
</dbReference>
<dbReference type="Gene3D" id="2.40.50.150">
    <property type="match status" value="1"/>
</dbReference>
<dbReference type="Gene3D" id="3.90.1100.10">
    <property type="match status" value="2"/>
</dbReference>
<dbReference type="Gene3D" id="2.40.270.10">
    <property type="entry name" value="DNA-directed RNA polymerase, subunit 2, domain 6"/>
    <property type="match status" value="1"/>
</dbReference>
<dbReference type="Gene3D" id="3.90.1800.10">
    <property type="entry name" value="RNA polymerase alpha subunit dimerisation domain"/>
    <property type="match status" value="1"/>
</dbReference>
<dbReference type="InterPro" id="IPR015712">
    <property type="entry name" value="DNA-dir_RNA_pol_su2"/>
</dbReference>
<dbReference type="InterPro" id="IPR007120">
    <property type="entry name" value="DNA-dir_RNAP_su2_dom"/>
</dbReference>
<dbReference type="InterPro" id="IPR037033">
    <property type="entry name" value="DNA-dir_RNAP_su2_hyb_sf"/>
</dbReference>
<dbReference type="InterPro" id="IPR007645">
    <property type="entry name" value="RNA_pol_Rpb2_3"/>
</dbReference>
<dbReference type="InterPro" id="IPR007641">
    <property type="entry name" value="RNA_pol_Rpb2_7"/>
</dbReference>
<dbReference type="InterPro" id="IPR014724">
    <property type="entry name" value="RNA_pol_RPB2_OB-fold"/>
</dbReference>
<dbReference type="PANTHER" id="PTHR20856">
    <property type="entry name" value="DNA-DIRECTED RNA POLYMERASE I SUBUNIT 2"/>
    <property type="match status" value="1"/>
</dbReference>
<dbReference type="Pfam" id="PF04565">
    <property type="entry name" value="RNA_pol_Rpb2_3"/>
    <property type="match status" value="1"/>
</dbReference>
<dbReference type="Pfam" id="PF00562">
    <property type="entry name" value="RNA_pol_Rpb2_6"/>
    <property type="match status" value="1"/>
</dbReference>
<dbReference type="Pfam" id="PF04560">
    <property type="entry name" value="RNA_pol_Rpb2_7"/>
    <property type="match status" value="1"/>
</dbReference>
<dbReference type="SUPFAM" id="SSF64484">
    <property type="entry name" value="beta and beta-prime subunits of DNA dependent RNA-polymerase"/>
    <property type="match status" value="1"/>
</dbReference>
<feature type="chain" id="PRO_0000300456" description="DNA-directed RNA polymerase subunit beta">
    <location>
        <begin position="1"/>
        <end position="1051"/>
    </location>
</feature>
<feature type="sequence conflict" description="In Ref. 1; AAD17842." evidence="2" ref="1">
    <original>F</original>
    <variation>I</variation>
    <location>
        <position position="627"/>
    </location>
</feature>
<name>RPOB_TOXGO</name>
<reference key="1">
    <citation type="submission" date="1998-09" db="EMBL/GenBank/DDBJ databases">
        <title>Analysis of the rpoB gene product of Toxoplasma gondii.</title>
        <authorList>
            <person name="Aiello D.P."/>
            <person name="Lang-Unnasch N."/>
        </authorList>
    </citation>
    <scope>NUCLEOTIDE SEQUENCE [GENOMIC DNA]</scope>
    <source>
        <strain>RH</strain>
    </source>
</reference>
<reference key="2">
    <citation type="submission" date="1999-06" db="EMBL/GenBank/DDBJ databases">
        <title>Mapping, cloning, and complete sequence annotation of the 35-kb plastid genome of Toxoplasma gondii.</title>
        <authorList>
            <person name="Kissinger J.C."/>
            <person name="Donald R.G."/>
            <person name="Moulton A.L."/>
            <person name="Gutell R."/>
            <person name="Aiello D.P."/>
            <person name="Lang-Unnasch N."/>
            <person name="Roos D.S."/>
        </authorList>
    </citation>
    <scope>NUCLEOTIDE SEQUENCE [GENOMIC DNA]</scope>
    <source>
        <strain>RH</strain>
    </source>
</reference>
<protein>
    <recommendedName>
        <fullName>DNA-directed RNA polymerase subunit beta</fullName>
        <ecNumber>2.7.7.6</ecNumber>
    </recommendedName>
    <alternativeName>
        <fullName>PEP</fullName>
    </alternativeName>
    <alternativeName>
        <fullName>Plastid-encoded RNA polymerase subunit beta</fullName>
        <shortName>RNA polymerase subunit beta</shortName>
    </alternativeName>
</protein>